<comment type="function">
    <text evidence="3">Odorant receptor.</text>
</comment>
<comment type="subcellular location">
    <subcellularLocation>
        <location>Cell membrane</location>
        <topology>Multi-pass membrane protein</topology>
    </subcellularLocation>
</comment>
<comment type="similarity">
    <text evidence="2">Belongs to the G-protein coupled receptor 1 family.</text>
</comment>
<comment type="sequence caution" evidence="3">
    <conflict type="erroneous initiation">
        <sequence resource="EMBL-CDS" id="CAB99212"/>
    </conflict>
</comment>
<comment type="online information" name="Human Olfactory Receptor Data Exploratorium (HORDE)">
    <link uri="http://genome.weizmann.ac.il/horde/card/index/symbol:OR2A4"/>
</comment>
<dbReference type="EMBL" id="AC005587">
    <property type="protein sequence ID" value="AAD05193.1"/>
    <property type="molecule type" value="Genomic_DNA"/>
</dbReference>
<dbReference type="EMBL" id="AL135904">
    <property type="protein sequence ID" value="CAB99212.1"/>
    <property type="status" value="ALT_INIT"/>
    <property type="molecule type" value="Genomic_DNA"/>
</dbReference>
<dbReference type="EMBL" id="BC120953">
    <property type="protein sequence ID" value="AAI20954.1"/>
    <property type="molecule type" value="mRNA"/>
</dbReference>
<dbReference type="EMBL" id="BC120954">
    <property type="protein sequence ID" value="AAI20955.1"/>
    <property type="molecule type" value="mRNA"/>
</dbReference>
<dbReference type="EMBL" id="BK004444">
    <property type="protein sequence ID" value="DAA04842.1"/>
    <property type="molecule type" value="Genomic_DNA"/>
</dbReference>
<dbReference type="CCDS" id="CCDS5149.1"/>
<dbReference type="RefSeq" id="NP_112170.1">
    <property type="nucleotide sequence ID" value="NM_030908.2"/>
</dbReference>
<dbReference type="SMR" id="O95047"/>
<dbReference type="BioGRID" id="122708">
    <property type="interactions" value="145"/>
</dbReference>
<dbReference type="FunCoup" id="O95047">
    <property type="interactions" value="429"/>
</dbReference>
<dbReference type="IntAct" id="O95047">
    <property type="interactions" value="143"/>
</dbReference>
<dbReference type="STRING" id="9606.ENSP00000319546"/>
<dbReference type="GlyCosmos" id="O95047">
    <property type="glycosylation" value="1 site, No reported glycans"/>
</dbReference>
<dbReference type="GlyGen" id="O95047">
    <property type="glycosylation" value="1 site"/>
</dbReference>
<dbReference type="iPTMnet" id="O95047"/>
<dbReference type="PhosphoSitePlus" id="O95047"/>
<dbReference type="BioMuta" id="OR2A4"/>
<dbReference type="MassIVE" id="O95047"/>
<dbReference type="PaxDb" id="9606-ENSP00000319546"/>
<dbReference type="PeptideAtlas" id="O95047"/>
<dbReference type="Antibodypedia" id="19691">
    <property type="antibodies" value="172 antibodies from 24 providers"/>
</dbReference>
<dbReference type="DNASU" id="79541"/>
<dbReference type="Ensembl" id="ENST00000315453.4">
    <property type="protein sequence ID" value="ENSP00000319546.2"/>
    <property type="gene ID" value="ENSG00000180658.4"/>
</dbReference>
<dbReference type="GeneID" id="79541"/>
<dbReference type="KEGG" id="hsa:79541"/>
<dbReference type="MANE-Select" id="ENST00000315453.4">
    <property type="protein sequence ID" value="ENSP00000319546.2"/>
    <property type="RefSeq nucleotide sequence ID" value="NM_030908.2"/>
    <property type="RefSeq protein sequence ID" value="NP_112170.1"/>
</dbReference>
<dbReference type="UCSC" id="uc011ecd.2">
    <property type="organism name" value="human"/>
</dbReference>
<dbReference type="AGR" id="HGNC:14729"/>
<dbReference type="CTD" id="79541"/>
<dbReference type="GeneCards" id="OR2A4"/>
<dbReference type="HGNC" id="HGNC:14729">
    <property type="gene designation" value="OR2A4"/>
</dbReference>
<dbReference type="HPA" id="ENSG00000180658">
    <property type="expression patterns" value="Not detected"/>
</dbReference>
<dbReference type="neXtProt" id="NX_O95047"/>
<dbReference type="PharmGKB" id="PA32117"/>
<dbReference type="VEuPathDB" id="HostDB:ENSG00000180658"/>
<dbReference type="eggNOG" id="ENOG502SM15">
    <property type="taxonomic scope" value="Eukaryota"/>
</dbReference>
<dbReference type="GeneTree" id="ENSGT00940000161677"/>
<dbReference type="HOGENOM" id="CLU_012526_1_2_1"/>
<dbReference type="InParanoid" id="O95047"/>
<dbReference type="OMA" id="IWAVLHI"/>
<dbReference type="OrthoDB" id="6147321at2759"/>
<dbReference type="PAN-GO" id="O95047">
    <property type="GO annotations" value="4 GO annotations based on evolutionary models"/>
</dbReference>
<dbReference type="PhylomeDB" id="O95047"/>
<dbReference type="TreeFam" id="TF337251"/>
<dbReference type="PathwayCommons" id="O95047"/>
<dbReference type="Reactome" id="R-HSA-9752946">
    <property type="pathway name" value="Expression and translocation of olfactory receptors"/>
</dbReference>
<dbReference type="BioGRID-ORCS" id="79541">
    <property type="hits" value="29 hits in 607 CRISPR screens"/>
</dbReference>
<dbReference type="GeneWiki" id="OR2A4"/>
<dbReference type="GenomeRNAi" id="79541"/>
<dbReference type="Pharos" id="O95047">
    <property type="development level" value="Tdark"/>
</dbReference>
<dbReference type="PRO" id="PR:O95047"/>
<dbReference type="Proteomes" id="UP000005640">
    <property type="component" value="Chromosome 6"/>
</dbReference>
<dbReference type="RNAct" id="O95047">
    <property type="molecule type" value="protein"/>
</dbReference>
<dbReference type="Bgee" id="ENSG00000180658">
    <property type="expression patterns" value="Expressed in colonic epithelium and 60 other cell types or tissues"/>
</dbReference>
<dbReference type="ExpressionAtlas" id="O95047">
    <property type="expression patterns" value="baseline and differential"/>
</dbReference>
<dbReference type="GO" id="GO:0032154">
    <property type="term" value="C:cleavage furrow"/>
    <property type="evidence" value="ECO:0000314"/>
    <property type="project" value="UniProtKB"/>
</dbReference>
<dbReference type="GO" id="GO:0090543">
    <property type="term" value="C:Flemming body"/>
    <property type="evidence" value="ECO:0000314"/>
    <property type="project" value="UniProtKB"/>
</dbReference>
<dbReference type="GO" id="GO:0016020">
    <property type="term" value="C:membrane"/>
    <property type="evidence" value="ECO:0000318"/>
    <property type="project" value="GO_Central"/>
</dbReference>
<dbReference type="GO" id="GO:1990023">
    <property type="term" value="C:mitotic spindle midzone"/>
    <property type="evidence" value="ECO:0000314"/>
    <property type="project" value="UniProtKB"/>
</dbReference>
<dbReference type="GO" id="GO:0097431">
    <property type="term" value="C:mitotic spindle pole"/>
    <property type="evidence" value="ECO:0000314"/>
    <property type="project" value="UniProtKB"/>
</dbReference>
<dbReference type="GO" id="GO:0055037">
    <property type="term" value="C:recycling endosome"/>
    <property type="evidence" value="ECO:0000314"/>
    <property type="project" value="UniProtKB"/>
</dbReference>
<dbReference type="GO" id="GO:0004930">
    <property type="term" value="F:G protein-coupled receptor activity"/>
    <property type="evidence" value="ECO:0007669"/>
    <property type="project" value="UniProtKB-KW"/>
</dbReference>
<dbReference type="GO" id="GO:0005549">
    <property type="term" value="F:odorant binding"/>
    <property type="evidence" value="ECO:0000318"/>
    <property type="project" value="GO_Central"/>
</dbReference>
<dbReference type="GO" id="GO:0004984">
    <property type="term" value="F:olfactory receptor activity"/>
    <property type="evidence" value="ECO:0000318"/>
    <property type="project" value="GO_Central"/>
</dbReference>
<dbReference type="GO" id="GO:0050911">
    <property type="term" value="P:detection of chemical stimulus involved in sensory perception of smell"/>
    <property type="evidence" value="ECO:0000318"/>
    <property type="project" value="GO_Central"/>
</dbReference>
<dbReference type="GO" id="GO:0032467">
    <property type="term" value="P:positive regulation of cytokinesis"/>
    <property type="evidence" value="ECO:0000315"/>
    <property type="project" value="UniProtKB"/>
</dbReference>
<dbReference type="GO" id="GO:0032956">
    <property type="term" value="P:regulation of actin cytoskeleton organization"/>
    <property type="evidence" value="ECO:0000315"/>
    <property type="project" value="UniProtKB"/>
</dbReference>
<dbReference type="FunFam" id="1.20.1070.10:FF:000008">
    <property type="entry name" value="Olfactory receptor"/>
    <property type="match status" value="1"/>
</dbReference>
<dbReference type="Gene3D" id="1.20.1070.10">
    <property type="entry name" value="Rhodopsin 7-helix transmembrane proteins"/>
    <property type="match status" value="1"/>
</dbReference>
<dbReference type="InterPro" id="IPR000276">
    <property type="entry name" value="GPCR_Rhodpsn"/>
</dbReference>
<dbReference type="InterPro" id="IPR017452">
    <property type="entry name" value="GPCR_Rhodpsn_7TM"/>
</dbReference>
<dbReference type="InterPro" id="IPR000725">
    <property type="entry name" value="Olfact_rcpt"/>
</dbReference>
<dbReference type="PANTHER" id="PTHR26453">
    <property type="entry name" value="OLFACTORY RECEPTOR"/>
    <property type="match status" value="1"/>
</dbReference>
<dbReference type="Pfam" id="PF13853">
    <property type="entry name" value="7tm_4"/>
    <property type="match status" value="1"/>
</dbReference>
<dbReference type="PRINTS" id="PR00237">
    <property type="entry name" value="GPCRRHODOPSN"/>
</dbReference>
<dbReference type="PRINTS" id="PR00245">
    <property type="entry name" value="OLFACTORYR"/>
</dbReference>
<dbReference type="SUPFAM" id="SSF81321">
    <property type="entry name" value="Family A G protein-coupled receptor-like"/>
    <property type="match status" value="1"/>
</dbReference>
<dbReference type="PROSITE" id="PS50262">
    <property type="entry name" value="G_PROTEIN_RECEP_F1_2"/>
    <property type="match status" value="1"/>
</dbReference>
<reference key="1">
    <citation type="journal article" date="2003" name="Nature">
        <title>The DNA sequence and analysis of human chromosome 6.</title>
        <authorList>
            <person name="Mungall A.J."/>
            <person name="Palmer S.A."/>
            <person name="Sims S.K."/>
            <person name="Edwards C.A."/>
            <person name="Ashurst J.L."/>
            <person name="Wilming L."/>
            <person name="Jones M.C."/>
            <person name="Horton R."/>
            <person name="Hunt S.E."/>
            <person name="Scott C.E."/>
            <person name="Gilbert J.G.R."/>
            <person name="Clamp M.E."/>
            <person name="Bethel G."/>
            <person name="Milne S."/>
            <person name="Ainscough R."/>
            <person name="Almeida J.P."/>
            <person name="Ambrose K.D."/>
            <person name="Andrews T.D."/>
            <person name="Ashwell R.I.S."/>
            <person name="Babbage A.K."/>
            <person name="Bagguley C.L."/>
            <person name="Bailey J."/>
            <person name="Banerjee R."/>
            <person name="Barker D.J."/>
            <person name="Barlow K.F."/>
            <person name="Bates K."/>
            <person name="Beare D.M."/>
            <person name="Beasley H."/>
            <person name="Beasley O."/>
            <person name="Bird C.P."/>
            <person name="Blakey S.E."/>
            <person name="Bray-Allen S."/>
            <person name="Brook J."/>
            <person name="Brown A.J."/>
            <person name="Brown J.Y."/>
            <person name="Burford D.C."/>
            <person name="Burrill W."/>
            <person name="Burton J."/>
            <person name="Carder C."/>
            <person name="Carter N.P."/>
            <person name="Chapman J.C."/>
            <person name="Clark S.Y."/>
            <person name="Clark G."/>
            <person name="Clee C.M."/>
            <person name="Clegg S."/>
            <person name="Cobley V."/>
            <person name="Collier R.E."/>
            <person name="Collins J.E."/>
            <person name="Colman L.K."/>
            <person name="Corby N.R."/>
            <person name="Coville G.J."/>
            <person name="Culley K.M."/>
            <person name="Dhami P."/>
            <person name="Davies J."/>
            <person name="Dunn M."/>
            <person name="Earthrowl M.E."/>
            <person name="Ellington A.E."/>
            <person name="Evans K.A."/>
            <person name="Faulkner L."/>
            <person name="Francis M.D."/>
            <person name="Frankish A."/>
            <person name="Frankland J."/>
            <person name="French L."/>
            <person name="Garner P."/>
            <person name="Garnett J."/>
            <person name="Ghori M.J."/>
            <person name="Gilby L.M."/>
            <person name="Gillson C.J."/>
            <person name="Glithero R.J."/>
            <person name="Grafham D.V."/>
            <person name="Grant M."/>
            <person name="Gribble S."/>
            <person name="Griffiths C."/>
            <person name="Griffiths M.N.D."/>
            <person name="Hall R."/>
            <person name="Halls K.S."/>
            <person name="Hammond S."/>
            <person name="Harley J.L."/>
            <person name="Hart E.A."/>
            <person name="Heath P.D."/>
            <person name="Heathcott R."/>
            <person name="Holmes S.J."/>
            <person name="Howden P.J."/>
            <person name="Howe K.L."/>
            <person name="Howell G.R."/>
            <person name="Huckle E."/>
            <person name="Humphray S.J."/>
            <person name="Humphries M.D."/>
            <person name="Hunt A.R."/>
            <person name="Johnson C.M."/>
            <person name="Joy A.A."/>
            <person name="Kay M."/>
            <person name="Keenan S.J."/>
            <person name="Kimberley A.M."/>
            <person name="King A."/>
            <person name="Laird G.K."/>
            <person name="Langford C."/>
            <person name="Lawlor S."/>
            <person name="Leongamornlert D.A."/>
            <person name="Leversha M."/>
            <person name="Lloyd C.R."/>
            <person name="Lloyd D.M."/>
            <person name="Loveland J.E."/>
            <person name="Lovell J."/>
            <person name="Martin S."/>
            <person name="Mashreghi-Mohammadi M."/>
            <person name="Maslen G.L."/>
            <person name="Matthews L."/>
            <person name="McCann O.T."/>
            <person name="McLaren S.J."/>
            <person name="McLay K."/>
            <person name="McMurray A."/>
            <person name="Moore M.J.F."/>
            <person name="Mullikin J.C."/>
            <person name="Niblett D."/>
            <person name="Nickerson T."/>
            <person name="Novik K.L."/>
            <person name="Oliver K."/>
            <person name="Overton-Larty E.K."/>
            <person name="Parker A."/>
            <person name="Patel R."/>
            <person name="Pearce A.V."/>
            <person name="Peck A.I."/>
            <person name="Phillimore B.J.C.T."/>
            <person name="Phillips S."/>
            <person name="Plumb R.W."/>
            <person name="Porter K.M."/>
            <person name="Ramsey Y."/>
            <person name="Ranby S.A."/>
            <person name="Rice C.M."/>
            <person name="Ross M.T."/>
            <person name="Searle S.M."/>
            <person name="Sehra H.K."/>
            <person name="Sheridan E."/>
            <person name="Skuce C.D."/>
            <person name="Smith S."/>
            <person name="Smith M."/>
            <person name="Spraggon L."/>
            <person name="Squares S.L."/>
            <person name="Steward C.A."/>
            <person name="Sycamore N."/>
            <person name="Tamlyn-Hall G."/>
            <person name="Tester J."/>
            <person name="Theaker A.J."/>
            <person name="Thomas D.W."/>
            <person name="Thorpe A."/>
            <person name="Tracey A."/>
            <person name="Tromans A."/>
            <person name="Tubby B."/>
            <person name="Wall M."/>
            <person name="Wallis J.M."/>
            <person name="West A.P."/>
            <person name="White S.S."/>
            <person name="Whitehead S.L."/>
            <person name="Whittaker H."/>
            <person name="Wild A."/>
            <person name="Willey D.J."/>
            <person name="Wilmer T.E."/>
            <person name="Wood J.M."/>
            <person name="Wray P.W."/>
            <person name="Wyatt J.C."/>
            <person name="Young L."/>
            <person name="Younger R.M."/>
            <person name="Bentley D.R."/>
            <person name="Coulson A."/>
            <person name="Durbin R.M."/>
            <person name="Hubbard T."/>
            <person name="Sulston J.E."/>
            <person name="Dunham I."/>
            <person name="Rogers J."/>
            <person name="Beck S."/>
        </authorList>
    </citation>
    <scope>NUCLEOTIDE SEQUENCE [LARGE SCALE GENOMIC DNA]</scope>
</reference>
<reference key="2">
    <citation type="journal article" date="2004" name="Genome Res.">
        <title>The status, quality, and expansion of the NIH full-length cDNA project: the Mammalian Gene Collection (MGC).</title>
        <authorList>
            <consortium name="The MGC Project Team"/>
        </authorList>
    </citation>
    <scope>NUCLEOTIDE SEQUENCE [LARGE SCALE MRNA]</scope>
</reference>
<reference key="3">
    <citation type="journal article" date="2004" name="Proc. Natl. Acad. Sci. U.S.A.">
        <title>The human olfactory receptor gene family.</title>
        <authorList>
            <person name="Malnic B."/>
            <person name="Godfrey P.A."/>
            <person name="Buck L.B."/>
        </authorList>
    </citation>
    <scope>IDENTIFICATION</scope>
</reference>
<reference key="4">
    <citation type="journal article" date="2004" name="Proc. Natl. Acad. Sci. U.S.A.">
        <authorList>
            <person name="Malnic B."/>
            <person name="Godfrey P.A."/>
            <person name="Buck L.B."/>
        </authorList>
    </citation>
    <scope>ERRATUM OF PUBMED:14983052</scope>
</reference>
<gene>
    <name type="primary">OR2A4</name>
    <name type="synonym">OR2A10</name>
</gene>
<feature type="chain" id="PRO_0000150454" description="Olfactory receptor 2A4">
    <location>
        <begin position="1"/>
        <end position="310"/>
    </location>
</feature>
<feature type="topological domain" description="Extracellular" evidence="1">
    <location>
        <begin position="1"/>
        <end position="24"/>
    </location>
</feature>
<feature type="transmembrane region" description="Helical; Name=1" evidence="1">
    <location>
        <begin position="25"/>
        <end position="48"/>
    </location>
</feature>
<feature type="topological domain" description="Cytoplasmic" evidence="1">
    <location>
        <begin position="49"/>
        <end position="56"/>
    </location>
</feature>
<feature type="transmembrane region" description="Helical; Name=2" evidence="1">
    <location>
        <begin position="57"/>
        <end position="78"/>
    </location>
</feature>
<feature type="topological domain" description="Extracellular" evidence="1">
    <location>
        <begin position="79"/>
        <end position="99"/>
    </location>
</feature>
<feature type="transmembrane region" description="Helical; Name=3" evidence="1">
    <location>
        <begin position="100"/>
        <end position="119"/>
    </location>
</feature>
<feature type="topological domain" description="Cytoplasmic" evidence="1">
    <location>
        <begin position="120"/>
        <end position="138"/>
    </location>
</feature>
<feature type="transmembrane region" description="Helical; Name=4" evidence="1">
    <location>
        <begin position="139"/>
        <end position="157"/>
    </location>
</feature>
<feature type="topological domain" description="Extracellular" evidence="1">
    <location>
        <begin position="158"/>
        <end position="194"/>
    </location>
</feature>
<feature type="transmembrane region" description="Helical; Name=5" evidence="1">
    <location>
        <begin position="195"/>
        <end position="218"/>
    </location>
</feature>
<feature type="topological domain" description="Cytoplasmic" evidence="1">
    <location>
        <begin position="219"/>
        <end position="235"/>
    </location>
</feature>
<feature type="transmembrane region" description="Helical; Name=6" evidence="1">
    <location>
        <begin position="236"/>
        <end position="258"/>
    </location>
</feature>
<feature type="topological domain" description="Extracellular" evidence="1">
    <location>
        <begin position="259"/>
        <end position="271"/>
    </location>
</feature>
<feature type="transmembrane region" description="Helical; Name=7" evidence="1">
    <location>
        <begin position="272"/>
        <end position="291"/>
    </location>
</feature>
<feature type="topological domain" description="Cytoplasmic" evidence="1">
    <location>
        <begin position="292"/>
        <end position="310"/>
    </location>
</feature>
<feature type="glycosylation site" description="N-linked (GlcNAc...) asparagine" evidence="1">
    <location>
        <position position="4"/>
    </location>
</feature>
<sequence length="310" mass="34802">MGDNITSIREFLLLGFPVGPRIQMLLFGLFSLFYVFTLLGNGTILGLISLDSRLHAPMYFFLSHLAVVDIAYACNTVPRMLVNLLHPAKPISFAGRMMQTFLFSTFAVTECLLLVVMSYDLYVAICHPLRYLAIMTWRVCITLAVTSWTTGVLLSLIHLVLLLPLPFCRPQKIYHFFCEILAVLKLACADTHINENMVLAGAISGLVGPLSTIVVSYMCILCAILQIQSREVQRKAFRTCFSHLCVIGLVYGTAIIMYVGPRYGNPKEQKKYLLLFHSLFNPMLNPLICSLRNSEVKNTLKRVLGVERAL</sequence>
<proteinExistence type="evidence at transcript level"/>
<name>OR2A4_HUMAN</name>
<protein>
    <recommendedName>
        <fullName>Olfactory receptor 2A4</fullName>
    </recommendedName>
    <alternativeName>
        <fullName>Olfactory receptor 2A10</fullName>
    </alternativeName>
    <alternativeName>
        <fullName>Olfactory receptor OR6-37</fullName>
    </alternativeName>
</protein>
<accession>O95047</accession>
<accession>Q0VAR3</accession>
<accession>Q6IF18</accession>
<accession>Q9NQN0</accession>
<evidence type="ECO:0000255" key="1"/>
<evidence type="ECO:0000255" key="2">
    <source>
        <dbReference type="PROSITE-ProRule" id="PRU00521"/>
    </source>
</evidence>
<evidence type="ECO:0000305" key="3"/>
<keyword id="KW-1003">Cell membrane</keyword>
<keyword id="KW-0297">G-protein coupled receptor</keyword>
<keyword id="KW-0325">Glycoprotein</keyword>
<keyword id="KW-0472">Membrane</keyword>
<keyword id="KW-0552">Olfaction</keyword>
<keyword id="KW-0675">Receptor</keyword>
<keyword id="KW-1185">Reference proteome</keyword>
<keyword id="KW-0716">Sensory transduction</keyword>
<keyword id="KW-0807">Transducer</keyword>
<keyword id="KW-0812">Transmembrane</keyword>
<keyword id="KW-1133">Transmembrane helix</keyword>
<organism>
    <name type="scientific">Homo sapiens</name>
    <name type="common">Human</name>
    <dbReference type="NCBI Taxonomy" id="9606"/>
    <lineage>
        <taxon>Eukaryota</taxon>
        <taxon>Metazoa</taxon>
        <taxon>Chordata</taxon>
        <taxon>Craniata</taxon>
        <taxon>Vertebrata</taxon>
        <taxon>Euteleostomi</taxon>
        <taxon>Mammalia</taxon>
        <taxon>Eutheria</taxon>
        <taxon>Euarchontoglires</taxon>
        <taxon>Primates</taxon>
        <taxon>Haplorrhini</taxon>
        <taxon>Catarrhini</taxon>
        <taxon>Hominidae</taxon>
        <taxon>Homo</taxon>
    </lineage>
</organism>